<reference key="1">
    <citation type="journal article" date="2007" name="PLoS Genet.">
        <title>Meningococcal genetic variation mechanisms viewed through comparative analysis of serogroup C strain FAM18.</title>
        <authorList>
            <person name="Bentley S.D."/>
            <person name="Vernikos G.S."/>
            <person name="Snyder L.A.S."/>
            <person name="Churcher C."/>
            <person name="Arrowsmith C."/>
            <person name="Chillingworth T."/>
            <person name="Cronin A."/>
            <person name="Davis P.H."/>
            <person name="Holroyd N.E."/>
            <person name="Jagels K."/>
            <person name="Maddison M."/>
            <person name="Moule S."/>
            <person name="Rabbinowitsch E."/>
            <person name="Sharp S."/>
            <person name="Unwin L."/>
            <person name="Whitehead S."/>
            <person name="Quail M.A."/>
            <person name="Achtman M."/>
            <person name="Barrell B.G."/>
            <person name="Saunders N.J."/>
            <person name="Parkhill J."/>
        </authorList>
    </citation>
    <scope>NUCLEOTIDE SEQUENCE [LARGE SCALE GENOMIC DNA]</scope>
    <source>
        <strain>ATCC 700532 / DSM 15464 / FAM18</strain>
    </source>
</reference>
<protein>
    <recommendedName>
        <fullName evidence="1">ATP-dependent dethiobiotin synthetase BioD</fullName>
        <ecNumber evidence="1">6.3.3.3</ecNumber>
    </recommendedName>
    <alternativeName>
        <fullName evidence="1">DTB synthetase</fullName>
        <shortName evidence="1">DTBS</shortName>
    </alternativeName>
    <alternativeName>
        <fullName evidence="1">Dethiobiotin synthase</fullName>
    </alternativeName>
</protein>
<comment type="function">
    <text evidence="1">Catalyzes a mechanistically unusual reaction, the ATP-dependent insertion of CO2 between the N7 and N8 nitrogen atoms of 7,8-diaminopelargonic acid (DAPA, also called 7,8-diammoniononanoate) to form a ureido ring.</text>
</comment>
<comment type="catalytic activity">
    <reaction evidence="1">
        <text>(7R,8S)-7,8-diammoniononanoate + CO2 + ATP = (4R,5S)-dethiobiotin + ADP + phosphate + 3 H(+)</text>
        <dbReference type="Rhea" id="RHEA:15805"/>
        <dbReference type="ChEBI" id="CHEBI:15378"/>
        <dbReference type="ChEBI" id="CHEBI:16526"/>
        <dbReference type="ChEBI" id="CHEBI:30616"/>
        <dbReference type="ChEBI" id="CHEBI:43474"/>
        <dbReference type="ChEBI" id="CHEBI:149469"/>
        <dbReference type="ChEBI" id="CHEBI:149473"/>
        <dbReference type="ChEBI" id="CHEBI:456216"/>
        <dbReference type="EC" id="6.3.3.3"/>
    </reaction>
</comment>
<comment type="cofactor">
    <cofactor evidence="1">
        <name>Mg(2+)</name>
        <dbReference type="ChEBI" id="CHEBI:18420"/>
    </cofactor>
</comment>
<comment type="pathway">
    <text evidence="1">Cofactor biosynthesis; biotin biosynthesis; biotin from 7,8-diaminononanoate: step 1/2.</text>
</comment>
<comment type="subunit">
    <text evidence="1">Homodimer.</text>
</comment>
<comment type="subcellular location">
    <subcellularLocation>
        <location evidence="1">Cytoplasm</location>
    </subcellularLocation>
</comment>
<comment type="similarity">
    <text evidence="1">Belongs to the dethiobiotin synthetase family.</text>
</comment>
<feature type="chain" id="PRO_0000302533" description="ATP-dependent dethiobiotin synthetase BioD">
    <location>
        <begin position="1"/>
        <end position="215"/>
    </location>
</feature>
<feature type="active site" evidence="1">
    <location>
        <position position="38"/>
    </location>
</feature>
<feature type="binding site" evidence="1">
    <location>
        <begin position="13"/>
        <end position="18"/>
    </location>
    <ligand>
        <name>ATP</name>
        <dbReference type="ChEBI" id="CHEBI:30616"/>
    </ligand>
</feature>
<feature type="binding site" evidence="1">
    <location>
        <position position="17"/>
    </location>
    <ligand>
        <name>Mg(2+)</name>
        <dbReference type="ChEBI" id="CHEBI:18420"/>
    </ligand>
</feature>
<feature type="binding site" evidence="1">
    <location>
        <position position="42"/>
    </location>
    <ligand>
        <name>substrate</name>
    </ligand>
</feature>
<feature type="binding site" evidence="1">
    <location>
        <position position="50"/>
    </location>
    <ligand>
        <name>ATP</name>
        <dbReference type="ChEBI" id="CHEBI:30616"/>
    </ligand>
</feature>
<feature type="binding site" evidence="1">
    <location>
        <position position="50"/>
    </location>
    <ligand>
        <name>Mg(2+)</name>
        <dbReference type="ChEBI" id="CHEBI:18420"/>
    </ligand>
</feature>
<feature type="binding site" evidence="1">
    <location>
        <begin position="115"/>
        <end position="118"/>
    </location>
    <ligand>
        <name>ATP</name>
        <dbReference type="ChEBI" id="CHEBI:30616"/>
    </ligand>
</feature>
<feature type="binding site" evidence="1">
    <location>
        <position position="115"/>
    </location>
    <ligand>
        <name>Mg(2+)</name>
        <dbReference type="ChEBI" id="CHEBI:18420"/>
    </ligand>
</feature>
<feature type="binding site" evidence="1">
    <location>
        <begin position="175"/>
        <end position="176"/>
    </location>
    <ligand>
        <name>ATP</name>
        <dbReference type="ChEBI" id="CHEBI:30616"/>
    </ligand>
</feature>
<evidence type="ECO:0000255" key="1">
    <source>
        <dbReference type="HAMAP-Rule" id="MF_00336"/>
    </source>
</evidence>
<accession>A1KSZ5</accession>
<proteinExistence type="inferred from homology"/>
<name>BIOD_NEIMF</name>
<keyword id="KW-0067">ATP-binding</keyword>
<keyword id="KW-0093">Biotin biosynthesis</keyword>
<keyword id="KW-0963">Cytoplasm</keyword>
<keyword id="KW-0436">Ligase</keyword>
<keyword id="KW-0460">Magnesium</keyword>
<keyword id="KW-0479">Metal-binding</keyword>
<keyword id="KW-0547">Nucleotide-binding</keyword>
<organism>
    <name type="scientific">Neisseria meningitidis serogroup C / serotype 2a (strain ATCC 700532 / DSM 15464 / FAM18)</name>
    <dbReference type="NCBI Taxonomy" id="272831"/>
    <lineage>
        <taxon>Bacteria</taxon>
        <taxon>Pseudomonadati</taxon>
        <taxon>Pseudomonadota</taxon>
        <taxon>Betaproteobacteria</taxon>
        <taxon>Neisseriales</taxon>
        <taxon>Neisseriaceae</taxon>
        <taxon>Neisseria</taxon>
    </lineage>
</organism>
<sequence>MKGVYFVSGIDTDIGKTVATGMLAKQLLQQGKSVITQKPVQTGCQDIAEDIAVHRKIMGIPMQEADKRRLTMPEIFSYPASPHLAARLDGRALDLDKIRTATQELAAQYEIVLVEGAGGLMVPLTEKLLTIDYIQQQAYPVILVTSGRLGSINHTLLSFAALKQYGIRLHSLVFNHIHDSRDAHIAQYSLSYLKCRLKADFSEAEWMELAKTDAV</sequence>
<gene>
    <name evidence="1" type="primary">bioD</name>
    <name type="ordered locus">NMC0686</name>
</gene>
<dbReference type="EC" id="6.3.3.3" evidence="1"/>
<dbReference type="EMBL" id="AM421808">
    <property type="protein sequence ID" value="CAM09977.1"/>
    <property type="molecule type" value="Genomic_DNA"/>
</dbReference>
<dbReference type="RefSeq" id="WP_002221231.1">
    <property type="nucleotide sequence ID" value="NC_008767.1"/>
</dbReference>
<dbReference type="SMR" id="A1KSZ5"/>
<dbReference type="KEGG" id="nmc:NMC0686"/>
<dbReference type="HOGENOM" id="CLU_072551_3_0_4"/>
<dbReference type="UniPathway" id="UPA00078">
    <property type="reaction ID" value="UER00161"/>
</dbReference>
<dbReference type="Proteomes" id="UP000002286">
    <property type="component" value="Chromosome"/>
</dbReference>
<dbReference type="GO" id="GO:0005829">
    <property type="term" value="C:cytosol"/>
    <property type="evidence" value="ECO:0007669"/>
    <property type="project" value="TreeGrafter"/>
</dbReference>
<dbReference type="GO" id="GO:0005524">
    <property type="term" value="F:ATP binding"/>
    <property type="evidence" value="ECO:0007669"/>
    <property type="project" value="UniProtKB-UniRule"/>
</dbReference>
<dbReference type="GO" id="GO:0004141">
    <property type="term" value="F:dethiobiotin synthase activity"/>
    <property type="evidence" value="ECO:0007669"/>
    <property type="project" value="UniProtKB-UniRule"/>
</dbReference>
<dbReference type="GO" id="GO:0000287">
    <property type="term" value="F:magnesium ion binding"/>
    <property type="evidence" value="ECO:0007669"/>
    <property type="project" value="UniProtKB-UniRule"/>
</dbReference>
<dbReference type="GO" id="GO:0009102">
    <property type="term" value="P:biotin biosynthetic process"/>
    <property type="evidence" value="ECO:0007669"/>
    <property type="project" value="UniProtKB-UniRule"/>
</dbReference>
<dbReference type="CDD" id="cd03109">
    <property type="entry name" value="DTBS"/>
    <property type="match status" value="1"/>
</dbReference>
<dbReference type="FunFam" id="3.40.50.300:FF:000292">
    <property type="entry name" value="ATP-dependent dethiobiotin synthetase BioD"/>
    <property type="match status" value="1"/>
</dbReference>
<dbReference type="Gene3D" id="3.40.50.300">
    <property type="entry name" value="P-loop containing nucleotide triphosphate hydrolases"/>
    <property type="match status" value="1"/>
</dbReference>
<dbReference type="HAMAP" id="MF_00336">
    <property type="entry name" value="BioD"/>
    <property type="match status" value="1"/>
</dbReference>
<dbReference type="InterPro" id="IPR004472">
    <property type="entry name" value="DTB_synth_BioD"/>
</dbReference>
<dbReference type="InterPro" id="IPR027417">
    <property type="entry name" value="P-loop_NTPase"/>
</dbReference>
<dbReference type="NCBIfam" id="TIGR00347">
    <property type="entry name" value="bioD"/>
    <property type="match status" value="1"/>
</dbReference>
<dbReference type="PANTHER" id="PTHR43210:SF2">
    <property type="entry name" value="ATP-DEPENDENT DETHIOBIOTIN SYNTHETASE BIOD 2"/>
    <property type="match status" value="1"/>
</dbReference>
<dbReference type="PANTHER" id="PTHR43210">
    <property type="entry name" value="DETHIOBIOTIN SYNTHETASE"/>
    <property type="match status" value="1"/>
</dbReference>
<dbReference type="Pfam" id="PF13500">
    <property type="entry name" value="AAA_26"/>
    <property type="match status" value="1"/>
</dbReference>
<dbReference type="PIRSF" id="PIRSF006755">
    <property type="entry name" value="DTB_synth"/>
    <property type="match status" value="1"/>
</dbReference>
<dbReference type="SUPFAM" id="SSF52540">
    <property type="entry name" value="P-loop containing nucleoside triphosphate hydrolases"/>
    <property type="match status" value="1"/>
</dbReference>